<proteinExistence type="inferred from homology"/>
<comment type="function">
    <text evidence="1">Catalyzes the methylthiolation of N6-(dimethylallyl)adenosine (i(6)A), leading to the formation of 2-methylthio-N6-(dimethylallyl)adenosine (ms(2)i(6)A) at position 37 in tRNAs that read codons beginning with uridine.</text>
</comment>
<comment type="catalytic activity">
    <reaction evidence="1">
        <text>N(6)-dimethylallyladenosine(37) in tRNA + (sulfur carrier)-SH + AH2 + 2 S-adenosyl-L-methionine = 2-methylsulfanyl-N(6)-dimethylallyladenosine(37) in tRNA + (sulfur carrier)-H + 5'-deoxyadenosine + L-methionine + A + S-adenosyl-L-homocysteine + 2 H(+)</text>
        <dbReference type="Rhea" id="RHEA:37067"/>
        <dbReference type="Rhea" id="RHEA-COMP:10375"/>
        <dbReference type="Rhea" id="RHEA-COMP:10376"/>
        <dbReference type="Rhea" id="RHEA-COMP:14737"/>
        <dbReference type="Rhea" id="RHEA-COMP:14739"/>
        <dbReference type="ChEBI" id="CHEBI:13193"/>
        <dbReference type="ChEBI" id="CHEBI:15378"/>
        <dbReference type="ChEBI" id="CHEBI:17319"/>
        <dbReference type="ChEBI" id="CHEBI:17499"/>
        <dbReference type="ChEBI" id="CHEBI:29917"/>
        <dbReference type="ChEBI" id="CHEBI:57844"/>
        <dbReference type="ChEBI" id="CHEBI:57856"/>
        <dbReference type="ChEBI" id="CHEBI:59789"/>
        <dbReference type="ChEBI" id="CHEBI:64428"/>
        <dbReference type="ChEBI" id="CHEBI:74415"/>
        <dbReference type="ChEBI" id="CHEBI:74417"/>
        <dbReference type="EC" id="2.8.4.3"/>
    </reaction>
</comment>
<comment type="cofactor">
    <cofactor evidence="1">
        <name>[4Fe-4S] cluster</name>
        <dbReference type="ChEBI" id="CHEBI:49883"/>
    </cofactor>
    <text evidence="1">Binds 2 [4Fe-4S] clusters. One cluster is coordinated with 3 cysteines and an exchangeable S-adenosyl-L-methionine.</text>
</comment>
<comment type="subunit">
    <text evidence="1">Monomer.</text>
</comment>
<comment type="subcellular location">
    <subcellularLocation>
        <location evidence="1">Cytoplasm</location>
    </subcellularLocation>
</comment>
<comment type="similarity">
    <text evidence="1">Belongs to the methylthiotransferase family. MiaB subfamily.</text>
</comment>
<reference key="1">
    <citation type="submission" date="2005-10" db="EMBL/GenBank/DDBJ databases">
        <title>Complete sequence of Pelobacter carbinolicus DSM 2380.</title>
        <authorList>
            <person name="Copeland A."/>
            <person name="Lucas S."/>
            <person name="Lapidus A."/>
            <person name="Barry K."/>
            <person name="Detter J.C."/>
            <person name="Glavina T."/>
            <person name="Hammon N."/>
            <person name="Israni S."/>
            <person name="Pitluck S."/>
            <person name="Chertkov O."/>
            <person name="Schmutz J."/>
            <person name="Larimer F."/>
            <person name="Land M."/>
            <person name="Kyrpides N."/>
            <person name="Ivanova N."/>
            <person name="Richardson P."/>
        </authorList>
    </citation>
    <scope>NUCLEOTIDE SEQUENCE [LARGE SCALE GENOMIC DNA]</scope>
    <source>
        <strain>DSM 2380 / NBRC 103641 / GraBd1</strain>
    </source>
</reference>
<evidence type="ECO:0000255" key="1">
    <source>
        <dbReference type="HAMAP-Rule" id="MF_01864"/>
    </source>
</evidence>
<evidence type="ECO:0000255" key="2">
    <source>
        <dbReference type="PROSITE-ProRule" id="PRU01266"/>
    </source>
</evidence>
<sequence>MKSFYLETFGCQMNVVDSEQIVGLVQSLGYSSVDSPEQANLIILNTCSIRARAERKVYGHLGRFKPLKQRRPELIIAVCGCVAQQEGQRMLEKVPYLDIVCGTHNIHRLADMVRDAELHRARHVEVDFLEADKRRRLFPERAPSAEVSRFVTVIQGCDNFCSYCIVPHVRGREVSRPSAEVLEEVRLLVEQGAREITLIGQNVNSYGCKEDDEISFASLLRKVAEVDGLERIRFMTSHPKDLSDELIDCFADLDKLCKHIHLPVQAGGDAVLKAMRRGYTRDQYLGRIERLRRVCPEIRMTSDVIVGFPGETESEFEQTMDLLERARFTEIYSFIFSARPGTSAADLPDDIPKEVKQQWFDRMLALQEEITRQYHQMDIGQVLPVLVEGSSRQGNGQLFGRTTWNRIVNFDGNPDLVGRIVPVRLTVAYRNSHLGERV</sequence>
<dbReference type="EC" id="2.8.4.3" evidence="1"/>
<dbReference type="EMBL" id="CP000142">
    <property type="protein sequence ID" value="ABA88463.1"/>
    <property type="molecule type" value="Genomic_DNA"/>
</dbReference>
<dbReference type="RefSeq" id="WP_011340937.1">
    <property type="nucleotide sequence ID" value="NC_007498.2"/>
</dbReference>
<dbReference type="SMR" id="Q3A594"/>
<dbReference type="STRING" id="338963.Pcar_1214"/>
<dbReference type="KEGG" id="pca:Pcar_1214"/>
<dbReference type="eggNOG" id="COG0621">
    <property type="taxonomic scope" value="Bacteria"/>
</dbReference>
<dbReference type="HOGENOM" id="CLU_018697_2_0_7"/>
<dbReference type="OrthoDB" id="9805215at2"/>
<dbReference type="Proteomes" id="UP000002534">
    <property type="component" value="Chromosome"/>
</dbReference>
<dbReference type="GO" id="GO:0005829">
    <property type="term" value="C:cytosol"/>
    <property type="evidence" value="ECO:0007669"/>
    <property type="project" value="TreeGrafter"/>
</dbReference>
<dbReference type="GO" id="GO:0051539">
    <property type="term" value="F:4 iron, 4 sulfur cluster binding"/>
    <property type="evidence" value="ECO:0007669"/>
    <property type="project" value="UniProtKB-UniRule"/>
</dbReference>
<dbReference type="GO" id="GO:0046872">
    <property type="term" value="F:metal ion binding"/>
    <property type="evidence" value="ECO:0007669"/>
    <property type="project" value="UniProtKB-KW"/>
</dbReference>
<dbReference type="GO" id="GO:0035597">
    <property type="term" value="F:N6-isopentenyladenosine methylthiotransferase activity"/>
    <property type="evidence" value="ECO:0007669"/>
    <property type="project" value="TreeGrafter"/>
</dbReference>
<dbReference type="CDD" id="cd01335">
    <property type="entry name" value="Radical_SAM"/>
    <property type="match status" value="1"/>
</dbReference>
<dbReference type="FunFam" id="3.40.50.12160:FF:000006">
    <property type="entry name" value="tRNA-2-methylthio-N(6)-dimethylallyladenosine synthase"/>
    <property type="match status" value="1"/>
</dbReference>
<dbReference type="FunFam" id="3.80.30.20:FF:000001">
    <property type="entry name" value="tRNA-2-methylthio-N(6)-dimethylallyladenosine synthase 2"/>
    <property type="match status" value="1"/>
</dbReference>
<dbReference type="Gene3D" id="3.40.50.12160">
    <property type="entry name" value="Methylthiotransferase, N-terminal domain"/>
    <property type="match status" value="1"/>
</dbReference>
<dbReference type="Gene3D" id="3.80.30.20">
    <property type="entry name" value="tm_1862 like domain"/>
    <property type="match status" value="1"/>
</dbReference>
<dbReference type="HAMAP" id="MF_01864">
    <property type="entry name" value="tRNA_metthiotr_MiaB"/>
    <property type="match status" value="1"/>
</dbReference>
<dbReference type="InterPro" id="IPR006638">
    <property type="entry name" value="Elp3/MiaA/NifB-like_rSAM"/>
</dbReference>
<dbReference type="InterPro" id="IPR005839">
    <property type="entry name" value="Methylthiotransferase"/>
</dbReference>
<dbReference type="InterPro" id="IPR020612">
    <property type="entry name" value="Methylthiotransferase_CS"/>
</dbReference>
<dbReference type="InterPro" id="IPR013848">
    <property type="entry name" value="Methylthiotransferase_N"/>
</dbReference>
<dbReference type="InterPro" id="IPR038135">
    <property type="entry name" value="Methylthiotransferase_N_sf"/>
</dbReference>
<dbReference type="InterPro" id="IPR006463">
    <property type="entry name" value="MiaB_methiolase"/>
</dbReference>
<dbReference type="InterPro" id="IPR007197">
    <property type="entry name" value="rSAM"/>
</dbReference>
<dbReference type="InterPro" id="IPR023404">
    <property type="entry name" value="rSAM_horseshoe"/>
</dbReference>
<dbReference type="InterPro" id="IPR002792">
    <property type="entry name" value="TRAM_dom"/>
</dbReference>
<dbReference type="NCBIfam" id="TIGR01574">
    <property type="entry name" value="miaB-methiolase"/>
    <property type="match status" value="1"/>
</dbReference>
<dbReference type="NCBIfam" id="TIGR00089">
    <property type="entry name" value="MiaB/RimO family radical SAM methylthiotransferase"/>
    <property type="match status" value="1"/>
</dbReference>
<dbReference type="PANTHER" id="PTHR43020">
    <property type="entry name" value="CDK5 REGULATORY SUBUNIT-ASSOCIATED PROTEIN 1"/>
    <property type="match status" value="1"/>
</dbReference>
<dbReference type="PANTHER" id="PTHR43020:SF2">
    <property type="entry name" value="MITOCHONDRIAL TRNA METHYLTHIOTRANSFERASE CDK5RAP1"/>
    <property type="match status" value="1"/>
</dbReference>
<dbReference type="Pfam" id="PF04055">
    <property type="entry name" value="Radical_SAM"/>
    <property type="match status" value="1"/>
</dbReference>
<dbReference type="Pfam" id="PF01938">
    <property type="entry name" value="TRAM"/>
    <property type="match status" value="1"/>
</dbReference>
<dbReference type="Pfam" id="PF00919">
    <property type="entry name" value="UPF0004"/>
    <property type="match status" value="1"/>
</dbReference>
<dbReference type="SFLD" id="SFLDF00273">
    <property type="entry name" value="(dimethylallyl)adenosine_tRNA"/>
    <property type="match status" value="1"/>
</dbReference>
<dbReference type="SFLD" id="SFLDG01082">
    <property type="entry name" value="B12-binding_domain_containing"/>
    <property type="match status" value="1"/>
</dbReference>
<dbReference type="SFLD" id="SFLDG01061">
    <property type="entry name" value="methylthiotransferase"/>
    <property type="match status" value="1"/>
</dbReference>
<dbReference type="SMART" id="SM00729">
    <property type="entry name" value="Elp3"/>
    <property type="match status" value="1"/>
</dbReference>
<dbReference type="SUPFAM" id="SSF102114">
    <property type="entry name" value="Radical SAM enzymes"/>
    <property type="match status" value="1"/>
</dbReference>
<dbReference type="PROSITE" id="PS51449">
    <property type="entry name" value="MTTASE_N"/>
    <property type="match status" value="1"/>
</dbReference>
<dbReference type="PROSITE" id="PS01278">
    <property type="entry name" value="MTTASE_RADICAL"/>
    <property type="match status" value="1"/>
</dbReference>
<dbReference type="PROSITE" id="PS51918">
    <property type="entry name" value="RADICAL_SAM"/>
    <property type="match status" value="1"/>
</dbReference>
<dbReference type="PROSITE" id="PS50926">
    <property type="entry name" value="TRAM"/>
    <property type="match status" value="1"/>
</dbReference>
<organism>
    <name type="scientific">Syntrophotalea carbinolica (strain DSM 2380 / NBRC 103641 / GraBd1)</name>
    <name type="common">Pelobacter carbinolicus</name>
    <dbReference type="NCBI Taxonomy" id="338963"/>
    <lineage>
        <taxon>Bacteria</taxon>
        <taxon>Pseudomonadati</taxon>
        <taxon>Thermodesulfobacteriota</taxon>
        <taxon>Desulfuromonadia</taxon>
        <taxon>Desulfuromonadales</taxon>
        <taxon>Syntrophotaleaceae</taxon>
        <taxon>Syntrophotalea</taxon>
    </lineage>
</organism>
<protein>
    <recommendedName>
        <fullName evidence="1">tRNA-2-methylthio-N(6)-dimethylallyladenosine synthase</fullName>
        <ecNumber evidence="1">2.8.4.3</ecNumber>
    </recommendedName>
    <alternativeName>
        <fullName evidence="1">(Dimethylallyl)adenosine tRNA methylthiotransferase MiaB</fullName>
    </alternativeName>
    <alternativeName>
        <fullName evidence="1">tRNA-i(6)A37 methylthiotransferase</fullName>
    </alternativeName>
</protein>
<feature type="chain" id="PRO_0000374428" description="tRNA-2-methylthio-N(6)-dimethylallyladenosine synthase">
    <location>
        <begin position="1"/>
        <end position="438"/>
    </location>
</feature>
<feature type="domain" description="MTTase N-terminal" evidence="1">
    <location>
        <begin position="2"/>
        <end position="118"/>
    </location>
</feature>
<feature type="domain" description="Radical SAM core" evidence="2">
    <location>
        <begin position="143"/>
        <end position="373"/>
    </location>
</feature>
<feature type="domain" description="TRAM" evidence="1">
    <location>
        <begin position="376"/>
        <end position="438"/>
    </location>
</feature>
<feature type="binding site" evidence="1">
    <location>
        <position position="11"/>
    </location>
    <ligand>
        <name>[4Fe-4S] cluster</name>
        <dbReference type="ChEBI" id="CHEBI:49883"/>
        <label>1</label>
    </ligand>
</feature>
<feature type="binding site" evidence="1">
    <location>
        <position position="47"/>
    </location>
    <ligand>
        <name>[4Fe-4S] cluster</name>
        <dbReference type="ChEBI" id="CHEBI:49883"/>
        <label>1</label>
    </ligand>
</feature>
<feature type="binding site" evidence="1">
    <location>
        <position position="81"/>
    </location>
    <ligand>
        <name>[4Fe-4S] cluster</name>
        <dbReference type="ChEBI" id="CHEBI:49883"/>
        <label>1</label>
    </ligand>
</feature>
<feature type="binding site" evidence="1">
    <location>
        <position position="157"/>
    </location>
    <ligand>
        <name>[4Fe-4S] cluster</name>
        <dbReference type="ChEBI" id="CHEBI:49883"/>
        <label>2</label>
        <note>4Fe-4S-S-AdoMet</note>
    </ligand>
</feature>
<feature type="binding site" evidence="1">
    <location>
        <position position="161"/>
    </location>
    <ligand>
        <name>[4Fe-4S] cluster</name>
        <dbReference type="ChEBI" id="CHEBI:49883"/>
        <label>2</label>
        <note>4Fe-4S-S-AdoMet</note>
    </ligand>
</feature>
<feature type="binding site" evidence="1">
    <location>
        <position position="164"/>
    </location>
    <ligand>
        <name>[4Fe-4S] cluster</name>
        <dbReference type="ChEBI" id="CHEBI:49883"/>
        <label>2</label>
        <note>4Fe-4S-S-AdoMet</note>
    </ligand>
</feature>
<name>MIAB_SYNC1</name>
<accession>Q3A594</accession>
<keyword id="KW-0004">4Fe-4S</keyword>
<keyword id="KW-0963">Cytoplasm</keyword>
<keyword id="KW-0408">Iron</keyword>
<keyword id="KW-0411">Iron-sulfur</keyword>
<keyword id="KW-0479">Metal-binding</keyword>
<keyword id="KW-1185">Reference proteome</keyword>
<keyword id="KW-0949">S-adenosyl-L-methionine</keyword>
<keyword id="KW-0808">Transferase</keyword>
<keyword id="KW-0819">tRNA processing</keyword>
<gene>
    <name evidence="1" type="primary">miaB</name>
    <name type="ordered locus">Pcar_1214</name>
</gene>